<gene>
    <name evidence="1" type="primary">argS</name>
    <name type="ordered locus">GOX1753</name>
</gene>
<protein>
    <recommendedName>
        <fullName evidence="1">Arginine--tRNA ligase</fullName>
        <ecNumber evidence="1">6.1.1.19</ecNumber>
    </recommendedName>
    <alternativeName>
        <fullName evidence="1">Arginyl-tRNA synthetase</fullName>
        <shortName evidence="1">ArgRS</shortName>
    </alternativeName>
</protein>
<name>SYR_GLUOX</name>
<feature type="chain" id="PRO_0000242028" description="Arginine--tRNA ligase">
    <location>
        <begin position="1"/>
        <end position="602"/>
    </location>
</feature>
<feature type="short sequence motif" description="'HIGH' region">
    <location>
        <begin position="138"/>
        <end position="148"/>
    </location>
</feature>
<sequence>MAADTTTLTTDCLFARTRVQVCDALRSVVPGLPEEVVQRVDLTPTRDPSHGDMATNAAMLAAKPARRKPAEIAAELVDKLFALPEVAKAEAAGPGFVNLTLKPEVLQGVAVSILKAGDQYGRSTMGQGTRVNVEYVSANPTGPMHVGHCRGAVVGDALANLLEAAGNTVTREYYINDAGTQVVALTWATYWRYLQVIGTEISADDFSPLTPNGLQYQGEYLIPVAQSIADKHGRALANADGGPADPSVWFETVRREALTQMMAAIREDLEALGISHEVFASEAETLASGRVDAAIAKLDSKGLLYEGVLEPPKGKMPEDWEARPQTLFRSTEFGDDQDRALRKSDGTNTYFANDIGYHAQKAENADVLIDVLGADHGGYVSRMRAAISALTDGKTGFEVVMCQIVRVVKNGEPVRMSKRAGTFVTLRDLLDEVGRDAVRFTMLTRKADAQMEFDLDAVVAQTRDNPVFYVQYAHARCRSVLRSAETMFGADTVTPEALCSADLSNLSSDVELAVLRRLAAFPRSVEAAATAREPHRIATYCIDLASDFHALWNRGREDTTLRFLHENDRATSLAKLALVSAIAGTLRCALTILGVVPVEEMR</sequence>
<organism>
    <name type="scientific">Gluconobacter oxydans (strain 621H)</name>
    <name type="common">Gluconobacter suboxydans</name>
    <dbReference type="NCBI Taxonomy" id="290633"/>
    <lineage>
        <taxon>Bacteria</taxon>
        <taxon>Pseudomonadati</taxon>
        <taxon>Pseudomonadota</taxon>
        <taxon>Alphaproteobacteria</taxon>
        <taxon>Acetobacterales</taxon>
        <taxon>Acetobacteraceae</taxon>
        <taxon>Gluconobacter</taxon>
    </lineage>
</organism>
<reference key="1">
    <citation type="journal article" date="2005" name="Nat. Biotechnol.">
        <title>Complete genome sequence of the acetic acid bacterium Gluconobacter oxydans.</title>
        <authorList>
            <person name="Prust C."/>
            <person name="Hoffmeister M."/>
            <person name="Liesegang H."/>
            <person name="Wiezer A."/>
            <person name="Fricke W.F."/>
            <person name="Ehrenreich A."/>
            <person name="Gottschalk G."/>
            <person name="Deppenmeier U."/>
        </authorList>
    </citation>
    <scope>NUCLEOTIDE SEQUENCE [LARGE SCALE GENOMIC DNA]</scope>
    <source>
        <strain>621H</strain>
    </source>
</reference>
<evidence type="ECO:0000255" key="1">
    <source>
        <dbReference type="HAMAP-Rule" id="MF_00123"/>
    </source>
</evidence>
<dbReference type="EC" id="6.1.1.19" evidence="1"/>
<dbReference type="EMBL" id="CP000009">
    <property type="protein sequence ID" value="AAW61492.1"/>
    <property type="molecule type" value="Genomic_DNA"/>
</dbReference>
<dbReference type="RefSeq" id="WP_011253273.1">
    <property type="nucleotide sequence ID" value="NC_006677.1"/>
</dbReference>
<dbReference type="SMR" id="Q5FQ54"/>
<dbReference type="STRING" id="290633.GOX1753"/>
<dbReference type="KEGG" id="gox:GOX1753"/>
<dbReference type="eggNOG" id="COG0018">
    <property type="taxonomic scope" value="Bacteria"/>
</dbReference>
<dbReference type="HOGENOM" id="CLU_006406_0_1_5"/>
<dbReference type="Proteomes" id="UP000006375">
    <property type="component" value="Chromosome"/>
</dbReference>
<dbReference type="GO" id="GO:0005737">
    <property type="term" value="C:cytoplasm"/>
    <property type="evidence" value="ECO:0007669"/>
    <property type="project" value="UniProtKB-SubCell"/>
</dbReference>
<dbReference type="GO" id="GO:0004814">
    <property type="term" value="F:arginine-tRNA ligase activity"/>
    <property type="evidence" value="ECO:0007669"/>
    <property type="project" value="UniProtKB-UniRule"/>
</dbReference>
<dbReference type="GO" id="GO:0005524">
    <property type="term" value="F:ATP binding"/>
    <property type="evidence" value="ECO:0007669"/>
    <property type="project" value="UniProtKB-UniRule"/>
</dbReference>
<dbReference type="GO" id="GO:0006420">
    <property type="term" value="P:arginyl-tRNA aminoacylation"/>
    <property type="evidence" value="ECO:0007669"/>
    <property type="project" value="UniProtKB-UniRule"/>
</dbReference>
<dbReference type="CDD" id="cd00671">
    <property type="entry name" value="ArgRS_core"/>
    <property type="match status" value="1"/>
</dbReference>
<dbReference type="Gene3D" id="3.30.1360.70">
    <property type="entry name" value="Arginyl tRNA synthetase N-terminal domain"/>
    <property type="match status" value="1"/>
</dbReference>
<dbReference type="Gene3D" id="3.40.50.620">
    <property type="entry name" value="HUPs"/>
    <property type="match status" value="1"/>
</dbReference>
<dbReference type="Gene3D" id="1.10.730.10">
    <property type="entry name" value="Isoleucyl-tRNA Synthetase, Domain 1"/>
    <property type="match status" value="1"/>
</dbReference>
<dbReference type="HAMAP" id="MF_00123">
    <property type="entry name" value="Arg_tRNA_synth"/>
    <property type="match status" value="1"/>
</dbReference>
<dbReference type="InterPro" id="IPR001412">
    <property type="entry name" value="aa-tRNA-synth_I_CS"/>
</dbReference>
<dbReference type="InterPro" id="IPR001278">
    <property type="entry name" value="Arg-tRNA-ligase"/>
</dbReference>
<dbReference type="InterPro" id="IPR005148">
    <property type="entry name" value="Arg-tRNA-synth_N"/>
</dbReference>
<dbReference type="InterPro" id="IPR036695">
    <property type="entry name" value="Arg-tRNA-synth_N_sf"/>
</dbReference>
<dbReference type="InterPro" id="IPR035684">
    <property type="entry name" value="ArgRS_core"/>
</dbReference>
<dbReference type="InterPro" id="IPR008909">
    <property type="entry name" value="DALR_anticod-bd"/>
</dbReference>
<dbReference type="InterPro" id="IPR014729">
    <property type="entry name" value="Rossmann-like_a/b/a_fold"/>
</dbReference>
<dbReference type="InterPro" id="IPR009080">
    <property type="entry name" value="tRNAsynth_Ia_anticodon-bd"/>
</dbReference>
<dbReference type="NCBIfam" id="TIGR00456">
    <property type="entry name" value="argS"/>
    <property type="match status" value="1"/>
</dbReference>
<dbReference type="PANTHER" id="PTHR11956:SF5">
    <property type="entry name" value="ARGININE--TRNA LIGASE, CYTOPLASMIC"/>
    <property type="match status" value="1"/>
</dbReference>
<dbReference type="PANTHER" id="PTHR11956">
    <property type="entry name" value="ARGINYL-TRNA SYNTHETASE"/>
    <property type="match status" value="1"/>
</dbReference>
<dbReference type="Pfam" id="PF03485">
    <property type="entry name" value="Arg_tRNA_synt_N"/>
    <property type="match status" value="1"/>
</dbReference>
<dbReference type="Pfam" id="PF05746">
    <property type="entry name" value="DALR_1"/>
    <property type="match status" value="1"/>
</dbReference>
<dbReference type="Pfam" id="PF00750">
    <property type="entry name" value="tRNA-synt_1d"/>
    <property type="match status" value="1"/>
</dbReference>
<dbReference type="PRINTS" id="PR01038">
    <property type="entry name" value="TRNASYNTHARG"/>
</dbReference>
<dbReference type="SMART" id="SM01016">
    <property type="entry name" value="Arg_tRNA_synt_N"/>
    <property type="match status" value="1"/>
</dbReference>
<dbReference type="SMART" id="SM00836">
    <property type="entry name" value="DALR_1"/>
    <property type="match status" value="1"/>
</dbReference>
<dbReference type="SUPFAM" id="SSF47323">
    <property type="entry name" value="Anticodon-binding domain of a subclass of class I aminoacyl-tRNA synthetases"/>
    <property type="match status" value="1"/>
</dbReference>
<dbReference type="SUPFAM" id="SSF55190">
    <property type="entry name" value="Arginyl-tRNA synthetase (ArgRS), N-terminal 'additional' domain"/>
    <property type="match status" value="1"/>
</dbReference>
<dbReference type="SUPFAM" id="SSF52374">
    <property type="entry name" value="Nucleotidylyl transferase"/>
    <property type="match status" value="1"/>
</dbReference>
<dbReference type="PROSITE" id="PS00178">
    <property type="entry name" value="AA_TRNA_LIGASE_I"/>
    <property type="match status" value="1"/>
</dbReference>
<accession>Q5FQ54</accession>
<comment type="catalytic activity">
    <reaction evidence="1">
        <text>tRNA(Arg) + L-arginine + ATP = L-arginyl-tRNA(Arg) + AMP + diphosphate</text>
        <dbReference type="Rhea" id="RHEA:20301"/>
        <dbReference type="Rhea" id="RHEA-COMP:9658"/>
        <dbReference type="Rhea" id="RHEA-COMP:9673"/>
        <dbReference type="ChEBI" id="CHEBI:30616"/>
        <dbReference type="ChEBI" id="CHEBI:32682"/>
        <dbReference type="ChEBI" id="CHEBI:33019"/>
        <dbReference type="ChEBI" id="CHEBI:78442"/>
        <dbReference type="ChEBI" id="CHEBI:78513"/>
        <dbReference type="ChEBI" id="CHEBI:456215"/>
        <dbReference type="EC" id="6.1.1.19"/>
    </reaction>
</comment>
<comment type="subunit">
    <text evidence="1">Monomer.</text>
</comment>
<comment type="subcellular location">
    <subcellularLocation>
        <location evidence="1">Cytoplasm</location>
    </subcellularLocation>
</comment>
<comment type="similarity">
    <text evidence="1">Belongs to the class-I aminoacyl-tRNA synthetase family.</text>
</comment>
<proteinExistence type="inferred from homology"/>
<keyword id="KW-0030">Aminoacyl-tRNA synthetase</keyword>
<keyword id="KW-0067">ATP-binding</keyword>
<keyword id="KW-0963">Cytoplasm</keyword>
<keyword id="KW-0436">Ligase</keyword>
<keyword id="KW-0547">Nucleotide-binding</keyword>
<keyword id="KW-0648">Protein biosynthesis</keyword>
<keyword id="KW-1185">Reference proteome</keyword>